<feature type="chain" id="PRO_0000253073" description="Putative membrane protein insertion efficiency factor">
    <location>
        <begin position="1"/>
        <end position="78"/>
    </location>
</feature>
<reference key="1">
    <citation type="journal article" date="2006" name="J. Bacteriol.">
        <title>Pathogenomic sequence analysis of Bacillus cereus and Bacillus thuringiensis isolates closely related to Bacillus anthracis.</title>
        <authorList>
            <person name="Han C.S."/>
            <person name="Xie G."/>
            <person name="Challacombe J.F."/>
            <person name="Altherr M.R."/>
            <person name="Bhotika S.S."/>
            <person name="Bruce D."/>
            <person name="Campbell C.S."/>
            <person name="Campbell M.L."/>
            <person name="Chen J."/>
            <person name="Chertkov O."/>
            <person name="Cleland C."/>
            <person name="Dimitrijevic M."/>
            <person name="Doggett N.A."/>
            <person name="Fawcett J.J."/>
            <person name="Glavina T."/>
            <person name="Goodwin L.A."/>
            <person name="Hill K.K."/>
            <person name="Hitchcock P."/>
            <person name="Jackson P.J."/>
            <person name="Keim P."/>
            <person name="Kewalramani A.R."/>
            <person name="Longmire J."/>
            <person name="Lucas S."/>
            <person name="Malfatti S."/>
            <person name="McMurry K."/>
            <person name="Meincke L.J."/>
            <person name="Misra M."/>
            <person name="Moseman B.L."/>
            <person name="Mundt M."/>
            <person name="Munk A.C."/>
            <person name="Okinaka R.T."/>
            <person name="Parson-Quintana B."/>
            <person name="Reilly L.P."/>
            <person name="Richardson P."/>
            <person name="Robinson D.L."/>
            <person name="Rubin E."/>
            <person name="Saunders E."/>
            <person name="Tapia R."/>
            <person name="Tesmer J.G."/>
            <person name="Thayer N."/>
            <person name="Thompson L.S."/>
            <person name="Tice H."/>
            <person name="Ticknor L.O."/>
            <person name="Wills P.L."/>
            <person name="Brettin T.S."/>
            <person name="Gilna P."/>
        </authorList>
    </citation>
    <scope>NUCLEOTIDE SEQUENCE [LARGE SCALE GENOMIC DNA]</scope>
    <source>
        <strain>ZK / E33L</strain>
    </source>
</reference>
<organism>
    <name type="scientific">Bacillus cereus (strain ZK / E33L)</name>
    <dbReference type="NCBI Taxonomy" id="288681"/>
    <lineage>
        <taxon>Bacteria</taxon>
        <taxon>Bacillati</taxon>
        <taxon>Bacillota</taxon>
        <taxon>Bacilli</taxon>
        <taxon>Bacillales</taxon>
        <taxon>Bacillaceae</taxon>
        <taxon>Bacillus</taxon>
        <taxon>Bacillus cereus group</taxon>
    </lineage>
</organism>
<protein>
    <recommendedName>
        <fullName evidence="1">Putative membrane protein insertion efficiency factor</fullName>
    </recommendedName>
</protein>
<gene>
    <name type="ordered locus">BCE33L4545</name>
</gene>
<dbReference type="EMBL" id="CP000001">
    <property type="protein sequence ID" value="AAU15728.1"/>
    <property type="molecule type" value="Genomic_DNA"/>
</dbReference>
<dbReference type="KEGG" id="bcz:BCE33L4545"/>
<dbReference type="PATRIC" id="fig|288681.22.peg.818"/>
<dbReference type="Proteomes" id="UP000002612">
    <property type="component" value="Chromosome"/>
</dbReference>
<dbReference type="GO" id="GO:0005886">
    <property type="term" value="C:plasma membrane"/>
    <property type="evidence" value="ECO:0007669"/>
    <property type="project" value="UniProtKB-SubCell"/>
</dbReference>
<dbReference type="HAMAP" id="MF_00386">
    <property type="entry name" value="UPF0161_YidD"/>
    <property type="match status" value="1"/>
</dbReference>
<dbReference type="InterPro" id="IPR002696">
    <property type="entry name" value="Membr_insert_effic_factor_YidD"/>
</dbReference>
<dbReference type="NCBIfam" id="TIGR00278">
    <property type="entry name" value="membrane protein insertion efficiency factor YidD"/>
    <property type="match status" value="1"/>
</dbReference>
<dbReference type="PANTHER" id="PTHR33383">
    <property type="entry name" value="MEMBRANE PROTEIN INSERTION EFFICIENCY FACTOR-RELATED"/>
    <property type="match status" value="1"/>
</dbReference>
<dbReference type="PANTHER" id="PTHR33383:SF1">
    <property type="entry name" value="MEMBRANE PROTEIN INSERTION EFFICIENCY FACTOR-RELATED"/>
    <property type="match status" value="1"/>
</dbReference>
<dbReference type="Pfam" id="PF01809">
    <property type="entry name" value="YidD"/>
    <property type="match status" value="1"/>
</dbReference>
<dbReference type="SMART" id="SM01234">
    <property type="entry name" value="Haemolytic"/>
    <property type="match status" value="1"/>
</dbReference>
<proteinExistence type="inferred from homology"/>
<accession>Q632P7</accession>
<keyword id="KW-1003">Cell membrane</keyword>
<keyword id="KW-0472">Membrane</keyword>
<sequence length="78" mass="9096">MKQIFIGIIRFYQKFISPMTPPTCRFYPTCSHYGLEAFQKHGAFKGFWLTCKRILKCHPFHPGGFDPVPDKKDDKVNS</sequence>
<comment type="function">
    <text evidence="1">Could be involved in insertion of integral membrane proteins into the membrane.</text>
</comment>
<comment type="subcellular location">
    <subcellularLocation>
        <location evidence="1">Cell membrane</location>
        <topology evidence="1">Peripheral membrane protein</topology>
        <orientation evidence="1">Cytoplasmic side</orientation>
    </subcellularLocation>
</comment>
<comment type="similarity">
    <text evidence="1">Belongs to the UPF0161 family.</text>
</comment>
<evidence type="ECO:0000255" key="1">
    <source>
        <dbReference type="HAMAP-Rule" id="MF_00386"/>
    </source>
</evidence>
<name>YIDD_BACCZ</name>